<proteinExistence type="evidence at protein level"/>
<gene>
    <name type="primary">Zcrb1</name>
</gene>
<accession>Q9CZ96</accession>
<accession>Q3TDL3</accession>
<keyword id="KW-0025">Alternative splicing</keyword>
<keyword id="KW-0479">Metal-binding</keyword>
<keyword id="KW-0507">mRNA processing</keyword>
<keyword id="KW-0508">mRNA splicing</keyword>
<keyword id="KW-0539">Nucleus</keyword>
<keyword id="KW-0597">Phosphoprotein</keyword>
<keyword id="KW-1185">Reference proteome</keyword>
<keyword id="KW-0694">RNA-binding</keyword>
<keyword id="KW-0747">Spliceosome</keyword>
<keyword id="KW-0862">Zinc</keyword>
<keyword id="KW-0863">Zinc-finger</keyword>
<comment type="subunit">
    <text evidence="1 6">Component of the U11/U12 snRNPs that are part of the U12-type spliceosome. Interacts with ZRSR1 (PubMed:29617656).</text>
</comment>
<comment type="subcellular location">
    <subcellularLocation>
        <location evidence="1">Nucleus</location>
        <location evidence="1">Nucleoplasm</location>
    </subcellularLocation>
</comment>
<comment type="alternative products">
    <event type="alternative splicing"/>
    <isoform>
        <id>Q9CZ96-1</id>
        <name>1</name>
        <sequence type="displayed"/>
    </isoform>
    <isoform>
        <id>Q9CZ96-2</id>
        <name>2</name>
        <sequence type="described" ref="VSP_020918"/>
    </isoform>
</comment>
<comment type="tissue specificity">
    <text evidence="5">Expressed at higher level in heart and testis, and at lower level in cerebellum. Weakly expressed at low level in liver.</text>
</comment>
<name>ZCRB1_MOUSE</name>
<reference key="1">
    <citation type="submission" date="2002-11" db="EMBL/GenBank/DDBJ databases">
        <title>Molecular cloning, identification and chromosomal localization of mouse MADP-1 gene encoding a novel RNA binding protein with zinc finger domain.</title>
        <authorList>
            <person name="Gao X."/>
            <person name="Wang H."/>
            <person name="He Y."/>
            <person name="Wang Y."/>
            <person name="Han J."/>
        </authorList>
    </citation>
    <scope>NUCLEOTIDE SEQUENCE [MRNA] (ISOFORM 1)</scope>
    <source>
        <strain>CD-1 X 129/SvJ</strain>
        <tissue>Brain</tissue>
    </source>
</reference>
<reference key="2">
    <citation type="journal article" date="2005" name="Science">
        <title>The transcriptional landscape of the mammalian genome.</title>
        <authorList>
            <person name="Carninci P."/>
            <person name="Kasukawa T."/>
            <person name="Katayama S."/>
            <person name="Gough J."/>
            <person name="Frith M.C."/>
            <person name="Maeda N."/>
            <person name="Oyama R."/>
            <person name="Ravasi T."/>
            <person name="Lenhard B."/>
            <person name="Wells C."/>
            <person name="Kodzius R."/>
            <person name="Shimokawa K."/>
            <person name="Bajic V.B."/>
            <person name="Brenner S.E."/>
            <person name="Batalov S."/>
            <person name="Forrest A.R."/>
            <person name="Zavolan M."/>
            <person name="Davis M.J."/>
            <person name="Wilming L.G."/>
            <person name="Aidinis V."/>
            <person name="Allen J.E."/>
            <person name="Ambesi-Impiombato A."/>
            <person name="Apweiler R."/>
            <person name="Aturaliya R.N."/>
            <person name="Bailey T.L."/>
            <person name="Bansal M."/>
            <person name="Baxter L."/>
            <person name="Beisel K.W."/>
            <person name="Bersano T."/>
            <person name="Bono H."/>
            <person name="Chalk A.M."/>
            <person name="Chiu K.P."/>
            <person name="Choudhary V."/>
            <person name="Christoffels A."/>
            <person name="Clutterbuck D.R."/>
            <person name="Crowe M.L."/>
            <person name="Dalla E."/>
            <person name="Dalrymple B.P."/>
            <person name="de Bono B."/>
            <person name="Della Gatta G."/>
            <person name="di Bernardo D."/>
            <person name="Down T."/>
            <person name="Engstrom P."/>
            <person name="Fagiolini M."/>
            <person name="Faulkner G."/>
            <person name="Fletcher C.F."/>
            <person name="Fukushima T."/>
            <person name="Furuno M."/>
            <person name="Futaki S."/>
            <person name="Gariboldi M."/>
            <person name="Georgii-Hemming P."/>
            <person name="Gingeras T.R."/>
            <person name="Gojobori T."/>
            <person name="Green R.E."/>
            <person name="Gustincich S."/>
            <person name="Harbers M."/>
            <person name="Hayashi Y."/>
            <person name="Hensch T.K."/>
            <person name="Hirokawa N."/>
            <person name="Hill D."/>
            <person name="Huminiecki L."/>
            <person name="Iacono M."/>
            <person name="Ikeo K."/>
            <person name="Iwama A."/>
            <person name="Ishikawa T."/>
            <person name="Jakt M."/>
            <person name="Kanapin A."/>
            <person name="Katoh M."/>
            <person name="Kawasawa Y."/>
            <person name="Kelso J."/>
            <person name="Kitamura H."/>
            <person name="Kitano H."/>
            <person name="Kollias G."/>
            <person name="Krishnan S.P."/>
            <person name="Kruger A."/>
            <person name="Kummerfeld S.K."/>
            <person name="Kurochkin I.V."/>
            <person name="Lareau L.F."/>
            <person name="Lazarevic D."/>
            <person name="Lipovich L."/>
            <person name="Liu J."/>
            <person name="Liuni S."/>
            <person name="McWilliam S."/>
            <person name="Madan Babu M."/>
            <person name="Madera M."/>
            <person name="Marchionni L."/>
            <person name="Matsuda H."/>
            <person name="Matsuzawa S."/>
            <person name="Miki H."/>
            <person name="Mignone F."/>
            <person name="Miyake S."/>
            <person name="Morris K."/>
            <person name="Mottagui-Tabar S."/>
            <person name="Mulder N."/>
            <person name="Nakano N."/>
            <person name="Nakauchi H."/>
            <person name="Ng P."/>
            <person name="Nilsson R."/>
            <person name="Nishiguchi S."/>
            <person name="Nishikawa S."/>
            <person name="Nori F."/>
            <person name="Ohara O."/>
            <person name="Okazaki Y."/>
            <person name="Orlando V."/>
            <person name="Pang K.C."/>
            <person name="Pavan W.J."/>
            <person name="Pavesi G."/>
            <person name="Pesole G."/>
            <person name="Petrovsky N."/>
            <person name="Piazza S."/>
            <person name="Reed J."/>
            <person name="Reid J.F."/>
            <person name="Ring B.Z."/>
            <person name="Ringwald M."/>
            <person name="Rost B."/>
            <person name="Ruan Y."/>
            <person name="Salzberg S.L."/>
            <person name="Sandelin A."/>
            <person name="Schneider C."/>
            <person name="Schoenbach C."/>
            <person name="Sekiguchi K."/>
            <person name="Semple C.A."/>
            <person name="Seno S."/>
            <person name="Sessa L."/>
            <person name="Sheng Y."/>
            <person name="Shibata Y."/>
            <person name="Shimada H."/>
            <person name="Shimada K."/>
            <person name="Silva D."/>
            <person name="Sinclair B."/>
            <person name="Sperling S."/>
            <person name="Stupka E."/>
            <person name="Sugiura K."/>
            <person name="Sultana R."/>
            <person name="Takenaka Y."/>
            <person name="Taki K."/>
            <person name="Tammoja K."/>
            <person name="Tan S.L."/>
            <person name="Tang S."/>
            <person name="Taylor M.S."/>
            <person name="Tegner J."/>
            <person name="Teichmann S.A."/>
            <person name="Ueda H.R."/>
            <person name="van Nimwegen E."/>
            <person name="Verardo R."/>
            <person name="Wei C.L."/>
            <person name="Yagi K."/>
            <person name="Yamanishi H."/>
            <person name="Zabarovsky E."/>
            <person name="Zhu S."/>
            <person name="Zimmer A."/>
            <person name="Hide W."/>
            <person name="Bult C."/>
            <person name="Grimmond S.M."/>
            <person name="Teasdale R.D."/>
            <person name="Liu E.T."/>
            <person name="Brusic V."/>
            <person name="Quackenbush J."/>
            <person name="Wahlestedt C."/>
            <person name="Mattick J.S."/>
            <person name="Hume D.A."/>
            <person name="Kai C."/>
            <person name="Sasaki D."/>
            <person name="Tomaru Y."/>
            <person name="Fukuda S."/>
            <person name="Kanamori-Katayama M."/>
            <person name="Suzuki M."/>
            <person name="Aoki J."/>
            <person name="Arakawa T."/>
            <person name="Iida J."/>
            <person name="Imamura K."/>
            <person name="Itoh M."/>
            <person name="Kato T."/>
            <person name="Kawaji H."/>
            <person name="Kawagashira N."/>
            <person name="Kawashima T."/>
            <person name="Kojima M."/>
            <person name="Kondo S."/>
            <person name="Konno H."/>
            <person name="Nakano K."/>
            <person name="Ninomiya N."/>
            <person name="Nishio T."/>
            <person name="Okada M."/>
            <person name="Plessy C."/>
            <person name="Shibata K."/>
            <person name="Shiraki T."/>
            <person name="Suzuki S."/>
            <person name="Tagami M."/>
            <person name="Waki K."/>
            <person name="Watahiki A."/>
            <person name="Okamura-Oho Y."/>
            <person name="Suzuki H."/>
            <person name="Kawai J."/>
            <person name="Hayashizaki Y."/>
        </authorList>
    </citation>
    <scope>NUCLEOTIDE SEQUENCE [LARGE SCALE MRNA] (ISOFORMS 1 AND 2)</scope>
    <source>
        <strain>C57BL/6J</strain>
        <strain>NOD</strain>
    </source>
</reference>
<reference key="3">
    <citation type="journal article" date="2004" name="Genome Res.">
        <title>The status, quality, and expansion of the NIH full-length cDNA project: the Mammalian Gene Collection (MGC).</title>
        <authorList>
            <consortium name="The MGC Project Team"/>
        </authorList>
    </citation>
    <scope>NUCLEOTIDE SEQUENCE [LARGE SCALE MRNA] (ISOFORM 1)</scope>
    <source>
        <strain>C57BL/6J</strain>
        <tissue>Brain</tissue>
    </source>
</reference>
<reference key="4">
    <citation type="journal article" date="2007" name="Genomics">
        <title>Isolation, expression, and characterization of the human ZCRB1 gene mapped to 12q12.</title>
        <authorList>
            <person name="Wang H."/>
            <person name="Gao M.X."/>
            <person name="Li L."/>
            <person name="Wang B."/>
            <person name="Hori N."/>
            <person name="Sato K."/>
        </authorList>
    </citation>
    <scope>TISSUE SPECIFICITY</scope>
</reference>
<reference key="5">
    <citation type="journal article" date="2010" name="Cell">
        <title>A tissue-specific atlas of mouse protein phosphorylation and expression.</title>
        <authorList>
            <person name="Huttlin E.L."/>
            <person name="Jedrychowski M.P."/>
            <person name="Elias J.E."/>
            <person name="Goswami T."/>
            <person name="Rad R."/>
            <person name="Beausoleil S.A."/>
            <person name="Villen J."/>
            <person name="Haas W."/>
            <person name="Sowa M.E."/>
            <person name="Gygi S.P."/>
        </authorList>
    </citation>
    <scope>PHOSPHORYLATION [LARGE SCALE ANALYSIS] AT SER-155; SER-210 AND SER-216</scope>
    <scope>IDENTIFICATION BY MASS SPECTROMETRY [LARGE SCALE ANALYSIS]</scope>
    <source>
        <tissue>Kidney</tissue>
        <tissue>Lung</tissue>
        <tissue>Spleen</tissue>
        <tissue>Testis</tissue>
    </source>
</reference>
<reference key="6">
    <citation type="journal article" date="2018" name="Cell Rep.">
        <title>Impaired spermatogenesis, muscle, and erythrocyte function in U12 intron splicing-defective zrsr1 mutant mice.</title>
        <authorList>
            <person name="Horiuchi K."/>
            <person name="Perez-Cerezales S."/>
            <person name="Papasaikas P."/>
            <person name="Ramos-Ibeas P."/>
            <person name="Lopez-Cardona A.P."/>
            <person name="Laguna-Barraza R."/>
            <person name="Fonseca Balvis N."/>
            <person name="Pericuesta E."/>
            <person name="Fernandez-Gonzalez R."/>
            <person name="Planells B."/>
            <person name="Viera A."/>
            <person name="Suja J.A."/>
            <person name="Ross P.J."/>
            <person name="Alen F."/>
            <person name="Orio L."/>
            <person name="Rodriguez de Fonseca F."/>
            <person name="Pintado B."/>
            <person name="Valcarcel J."/>
            <person name="Gutierrez-Adan A."/>
        </authorList>
    </citation>
    <scope>INTERACTION WITH ZRSR1</scope>
</reference>
<dbReference type="EMBL" id="AB095989">
    <property type="protein sequence ID" value="BAC23140.1"/>
    <property type="molecule type" value="mRNA"/>
</dbReference>
<dbReference type="EMBL" id="AK012852">
    <property type="protein sequence ID" value="BAB28513.1"/>
    <property type="molecule type" value="mRNA"/>
</dbReference>
<dbReference type="EMBL" id="AK170136">
    <property type="protein sequence ID" value="BAE41588.1"/>
    <property type="molecule type" value="mRNA"/>
</dbReference>
<dbReference type="EMBL" id="BC058368">
    <property type="protein sequence ID" value="AAH58368.1"/>
    <property type="molecule type" value="mRNA"/>
</dbReference>
<dbReference type="CCDS" id="CCDS27766.1">
    <molecule id="Q9CZ96-1"/>
</dbReference>
<dbReference type="CCDS" id="CCDS84190.1">
    <molecule id="Q9CZ96-2"/>
</dbReference>
<dbReference type="RefSeq" id="NP_001334026.1">
    <molecule id="Q9CZ96-2"/>
    <property type="nucleotide sequence ID" value="NM_001347097.1"/>
</dbReference>
<dbReference type="RefSeq" id="NP_080301.1">
    <molecule id="Q9CZ96-1"/>
    <property type="nucleotide sequence ID" value="NM_026025.3"/>
</dbReference>
<dbReference type="SMR" id="Q9CZ96"/>
<dbReference type="FunCoup" id="Q9CZ96">
    <property type="interactions" value="1395"/>
</dbReference>
<dbReference type="STRING" id="10090.ENSMUSP00000075441"/>
<dbReference type="iPTMnet" id="Q9CZ96"/>
<dbReference type="PhosphoSitePlus" id="Q9CZ96"/>
<dbReference type="jPOST" id="Q9CZ96"/>
<dbReference type="PaxDb" id="10090-ENSMUSP00000075441"/>
<dbReference type="PeptideAtlas" id="Q9CZ96"/>
<dbReference type="ProteomicsDB" id="302120">
    <molecule id="Q9CZ96-1"/>
</dbReference>
<dbReference type="ProteomicsDB" id="302121">
    <molecule id="Q9CZ96-2"/>
</dbReference>
<dbReference type="Pumba" id="Q9CZ96"/>
<dbReference type="Antibodypedia" id="25048">
    <property type="antibodies" value="122 antibodies from 25 providers"/>
</dbReference>
<dbReference type="Ensembl" id="ENSMUST00000076070.9">
    <molecule id="Q9CZ96-1"/>
    <property type="protein sequence ID" value="ENSMUSP00000075441.3"/>
    <property type="gene ID" value="ENSMUSG00000022635.10"/>
</dbReference>
<dbReference type="Ensembl" id="ENSMUST00000162160.8">
    <molecule id="Q9CZ96-2"/>
    <property type="protein sequence ID" value="ENSMUSP00000124549.2"/>
    <property type="gene ID" value="ENSMUSG00000022635.10"/>
</dbReference>
<dbReference type="GeneID" id="67197"/>
<dbReference type="KEGG" id="mmu:67197"/>
<dbReference type="UCSC" id="uc007xiu.1">
    <molecule id="Q9CZ96-1"/>
    <property type="organism name" value="mouse"/>
</dbReference>
<dbReference type="UCSC" id="uc007xiv.1">
    <molecule id="Q9CZ96-2"/>
    <property type="organism name" value="mouse"/>
</dbReference>
<dbReference type="AGR" id="MGI:1914447"/>
<dbReference type="CTD" id="85437"/>
<dbReference type="MGI" id="MGI:1914447">
    <property type="gene designation" value="Zcrb1"/>
</dbReference>
<dbReference type="VEuPathDB" id="HostDB:ENSMUSG00000022635"/>
<dbReference type="eggNOG" id="KOG0118">
    <property type="taxonomic scope" value="Eukaryota"/>
</dbReference>
<dbReference type="GeneTree" id="ENSGT00730000111061"/>
<dbReference type="HOGENOM" id="CLU_059455_1_0_1"/>
<dbReference type="InParanoid" id="Q9CZ96"/>
<dbReference type="OMA" id="AHYFNDE"/>
<dbReference type="OrthoDB" id="267048at2759"/>
<dbReference type="PhylomeDB" id="Q9CZ96"/>
<dbReference type="TreeFam" id="TF106263"/>
<dbReference type="Reactome" id="R-MMU-72165">
    <property type="pathway name" value="mRNA Splicing - Minor Pathway"/>
</dbReference>
<dbReference type="BioGRID-ORCS" id="67197">
    <property type="hits" value="3 hits in 78 CRISPR screens"/>
</dbReference>
<dbReference type="ChiTaRS" id="Zcrb1">
    <property type="organism name" value="mouse"/>
</dbReference>
<dbReference type="PRO" id="PR:Q9CZ96"/>
<dbReference type="Proteomes" id="UP000000589">
    <property type="component" value="Chromosome 15"/>
</dbReference>
<dbReference type="RNAct" id="Q9CZ96">
    <property type="molecule type" value="protein"/>
</dbReference>
<dbReference type="Bgee" id="ENSMUSG00000022635">
    <property type="expression patterns" value="Expressed in floor plate of midbrain and 246 other cell types or tissues"/>
</dbReference>
<dbReference type="ExpressionAtlas" id="Q9CZ96">
    <property type="expression patterns" value="baseline and differential"/>
</dbReference>
<dbReference type="GO" id="GO:0005654">
    <property type="term" value="C:nucleoplasm"/>
    <property type="evidence" value="ECO:0007669"/>
    <property type="project" value="UniProtKB-SubCell"/>
</dbReference>
<dbReference type="GO" id="GO:0005689">
    <property type="term" value="C:U12-type spliceosomal complex"/>
    <property type="evidence" value="ECO:0000250"/>
    <property type="project" value="HGNC-UCL"/>
</dbReference>
<dbReference type="GO" id="GO:0003723">
    <property type="term" value="F:RNA binding"/>
    <property type="evidence" value="ECO:0007669"/>
    <property type="project" value="UniProtKB-KW"/>
</dbReference>
<dbReference type="GO" id="GO:0008270">
    <property type="term" value="F:zinc ion binding"/>
    <property type="evidence" value="ECO:0007669"/>
    <property type="project" value="UniProtKB-KW"/>
</dbReference>
<dbReference type="GO" id="GO:0000398">
    <property type="term" value="P:mRNA splicing, via spliceosome"/>
    <property type="evidence" value="ECO:0007669"/>
    <property type="project" value="InterPro"/>
</dbReference>
<dbReference type="CDD" id="cd12393">
    <property type="entry name" value="RRM_ZCRB1"/>
    <property type="match status" value="1"/>
</dbReference>
<dbReference type="FunFam" id="3.30.70.330:FF:000233">
    <property type="entry name" value="Zinc finger CCHC-type and RNA-binding motif-containing protein 1"/>
    <property type="match status" value="1"/>
</dbReference>
<dbReference type="FunFam" id="4.10.60.10:FF:000009">
    <property type="entry name" value="Zinc finger CCHC-type and RNA-binding motif-containing protein 1"/>
    <property type="match status" value="1"/>
</dbReference>
<dbReference type="Gene3D" id="3.30.70.330">
    <property type="match status" value="1"/>
</dbReference>
<dbReference type="Gene3D" id="4.10.60.10">
    <property type="entry name" value="Zinc finger, CCHC-type"/>
    <property type="match status" value="1"/>
</dbReference>
<dbReference type="InterPro" id="IPR012677">
    <property type="entry name" value="Nucleotide-bd_a/b_plait_sf"/>
</dbReference>
<dbReference type="InterPro" id="IPR035979">
    <property type="entry name" value="RBD_domain_sf"/>
</dbReference>
<dbReference type="InterPro" id="IPR000504">
    <property type="entry name" value="RRM_dom"/>
</dbReference>
<dbReference type="InterPro" id="IPR003954">
    <property type="entry name" value="RRM_dom_euk"/>
</dbReference>
<dbReference type="InterPro" id="IPR044598">
    <property type="entry name" value="ZCRB1"/>
</dbReference>
<dbReference type="InterPro" id="IPR034219">
    <property type="entry name" value="ZCRB1_RRM"/>
</dbReference>
<dbReference type="InterPro" id="IPR001878">
    <property type="entry name" value="Znf_CCHC"/>
</dbReference>
<dbReference type="InterPro" id="IPR036875">
    <property type="entry name" value="Znf_CCHC_sf"/>
</dbReference>
<dbReference type="PANTHER" id="PTHR46259">
    <property type="entry name" value="ZINC FINGER CCHC-TYPE AND RNA-BINDING MOTIF-CONTAINING PROTEIN 1"/>
    <property type="match status" value="1"/>
</dbReference>
<dbReference type="PANTHER" id="PTHR46259:SF1">
    <property type="entry name" value="ZINC FINGER CCHC-TYPE AND RNA-BINDING MOTIF-CONTAINING PROTEIN 1"/>
    <property type="match status" value="1"/>
</dbReference>
<dbReference type="Pfam" id="PF00076">
    <property type="entry name" value="RRM_1"/>
    <property type="match status" value="1"/>
</dbReference>
<dbReference type="Pfam" id="PF00098">
    <property type="entry name" value="zf-CCHC"/>
    <property type="match status" value="1"/>
</dbReference>
<dbReference type="SMART" id="SM00360">
    <property type="entry name" value="RRM"/>
    <property type="match status" value="1"/>
</dbReference>
<dbReference type="SMART" id="SM00361">
    <property type="entry name" value="RRM_1"/>
    <property type="match status" value="1"/>
</dbReference>
<dbReference type="SMART" id="SM00343">
    <property type="entry name" value="ZnF_C2HC"/>
    <property type="match status" value="1"/>
</dbReference>
<dbReference type="SUPFAM" id="SSF57756">
    <property type="entry name" value="Retrovirus zinc finger-like domains"/>
    <property type="match status" value="1"/>
</dbReference>
<dbReference type="SUPFAM" id="SSF54928">
    <property type="entry name" value="RNA-binding domain, RBD"/>
    <property type="match status" value="1"/>
</dbReference>
<dbReference type="PROSITE" id="PS50102">
    <property type="entry name" value="RRM"/>
    <property type="match status" value="1"/>
</dbReference>
<dbReference type="PROSITE" id="PS50158">
    <property type="entry name" value="ZF_CCHC"/>
    <property type="match status" value="1"/>
</dbReference>
<protein>
    <recommendedName>
        <fullName>Zinc finger CCHC-type and RNA-binding motif-containing protein 1</fullName>
    </recommendedName>
    <alternativeName>
        <fullName>MADP-1</fullName>
    </alternativeName>
    <alternativeName>
        <fullName>U11/U12 small nuclear ribonucleoprotein 31 kDa protein</fullName>
        <shortName>U11/U12 snRNP 31 kDa protein</shortName>
    </alternativeName>
</protein>
<feature type="chain" id="PRO_0000252374" description="Zinc finger CCHC-type and RNA-binding motif-containing protein 1">
    <location>
        <begin position="1"/>
        <end position="217"/>
    </location>
</feature>
<feature type="domain" description="RRM" evidence="3">
    <location>
        <begin position="10"/>
        <end position="88"/>
    </location>
</feature>
<feature type="zinc finger region" description="CCHC-type" evidence="2">
    <location>
        <begin position="105"/>
        <end position="122"/>
    </location>
</feature>
<feature type="region of interest" description="Disordered" evidence="4">
    <location>
        <begin position="120"/>
        <end position="217"/>
    </location>
</feature>
<feature type="compositionally biased region" description="Acidic residues" evidence="4">
    <location>
        <begin position="145"/>
        <end position="163"/>
    </location>
</feature>
<feature type="modified residue" description="Phosphoserine" evidence="8">
    <location>
        <position position="155"/>
    </location>
</feature>
<feature type="modified residue" description="Phosphoserine" evidence="8">
    <location>
        <position position="210"/>
    </location>
</feature>
<feature type="modified residue" description="Phosphoserine" evidence="8">
    <location>
        <position position="216"/>
    </location>
</feature>
<feature type="splice variant" id="VSP_020918" description="In isoform 2." evidence="7">
    <location>
        <position position="174"/>
    </location>
</feature>
<sequence length="217" mass="24583">MSGGLAPSKSTVYVSNLPFSLTNNDLYRIFSKYGKVVKVTIMKDKDTRKSKGVAFILFLDKDSALNCTRAINNKQLFGRVIKASIAIDNGRAAEFIRRRNYFDKSKCYECGESGHLSYACPKNMLGEREPPKKKEKKKKRKLPEPEEEIEEVEVSEEEGEDPALDSLSQAIAFQQAKIEEEQSKWRPNPGGPSTSDDSRRPRIKKSAYFSDEEELSD</sequence>
<evidence type="ECO:0000250" key="1"/>
<evidence type="ECO:0000255" key="2">
    <source>
        <dbReference type="PROSITE-ProRule" id="PRU00047"/>
    </source>
</evidence>
<evidence type="ECO:0000255" key="3">
    <source>
        <dbReference type="PROSITE-ProRule" id="PRU00176"/>
    </source>
</evidence>
<evidence type="ECO:0000256" key="4">
    <source>
        <dbReference type="SAM" id="MobiDB-lite"/>
    </source>
</evidence>
<evidence type="ECO:0000269" key="5">
    <source>
    </source>
</evidence>
<evidence type="ECO:0000269" key="6">
    <source>
    </source>
</evidence>
<evidence type="ECO:0000303" key="7">
    <source>
    </source>
</evidence>
<evidence type="ECO:0007744" key="8">
    <source>
    </source>
</evidence>
<organism>
    <name type="scientific">Mus musculus</name>
    <name type="common">Mouse</name>
    <dbReference type="NCBI Taxonomy" id="10090"/>
    <lineage>
        <taxon>Eukaryota</taxon>
        <taxon>Metazoa</taxon>
        <taxon>Chordata</taxon>
        <taxon>Craniata</taxon>
        <taxon>Vertebrata</taxon>
        <taxon>Euteleostomi</taxon>
        <taxon>Mammalia</taxon>
        <taxon>Eutheria</taxon>
        <taxon>Euarchontoglires</taxon>
        <taxon>Glires</taxon>
        <taxon>Rodentia</taxon>
        <taxon>Myomorpha</taxon>
        <taxon>Muroidea</taxon>
        <taxon>Muridae</taxon>
        <taxon>Murinae</taxon>
        <taxon>Mus</taxon>
        <taxon>Mus</taxon>
    </lineage>
</organism>